<sequence length="430" mass="47235">MFVDQVKISLKAGDGGNGITAYRREKYVPFGGPAGGDGGKGASVVFEVDEGLRTLLDFRYQRHFKASKGENGQSSNMHGKNAEDLVLKVPPGTIIKNVETDEVLADLVEDGQRAVVAKGGRGGRGNSRFATPRNPAPDFSEKGEPGEELDVSLELKLLADVGLVGFPSVGKSTLLSIVSKAKPKIGAYHFTTIKPNLGVVSTPDQRSFVMADLPGLIEGASDGVGLGHQFLRHVERTKVIVHMIDMSGSEGREPIEDYKVINQELAAYEQRLEDRPQIVVANKMDLPESQDNLNLFKEEIGEDVPVIPVSTITRDNIDQLLYAIADKLEEYKDVDFTVEEEESVGINRVLYKHTPSQDKFTISRDDDGAYVVSGNAIERMFKMTDFNSDPAVRRFARQMRSMGIDDALRERGCKNGDIVRILGGEFEFVE</sequence>
<accession>A6U2B2</accession>
<name>OBG_STAA2</name>
<gene>
    <name evidence="1" type="primary">obg</name>
    <name type="ordered locus">SaurJH1_1734</name>
</gene>
<comment type="function">
    <text evidence="1">An essential GTPase which binds GTP, GDP and possibly (p)ppGpp with moderate affinity, with high nucleotide exchange rates and a fairly low GTP hydrolysis rate. Plays a role in control of the cell cycle, stress response, ribosome biogenesis and in those bacteria that undergo differentiation, in morphogenesis control.</text>
</comment>
<comment type="cofactor">
    <cofactor evidence="1">
        <name>Mg(2+)</name>
        <dbReference type="ChEBI" id="CHEBI:18420"/>
    </cofactor>
</comment>
<comment type="subunit">
    <text evidence="1">Monomer.</text>
</comment>
<comment type="subcellular location">
    <subcellularLocation>
        <location evidence="1">Cytoplasm</location>
    </subcellularLocation>
</comment>
<comment type="similarity">
    <text evidence="1">Belongs to the TRAFAC class OBG-HflX-like GTPase superfamily. OBG GTPase family.</text>
</comment>
<keyword id="KW-0963">Cytoplasm</keyword>
<keyword id="KW-0342">GTP-binding</keyword>
<keyword id="KW-0378">Hydrolase</keyword>
<keyword id="KW-0460">Magnesium</keyword>
<keyword id="KW-0479">Metal-binding</keyword>
<keyword id="KW-0547">Nucleotide-binding</keyword>
<dbReference type="EC" id="3.6.5.-" evidence="1"/>
<dbReference type="EMBL" id="CP000736">
    <property type="protein sequence ID" value="ABR52580.1"/>
    <property type="molecule type" value="Genomic_DNA"/>
</dbReference>
<dbReference type="SMR" id="A6U2B2"/>
<dbReference type="KEGG" id="sah:SaurJH1_1734"/>
<dbReference type="HOGENOM" id="CLU_011747_2_1_9"/>
<dbReference type="GO" id="GO:0005737">
    <property type="term" value="C:cytoplasm"/>
    <property type="evidence" value="ECO:0007669"/>
    <property type="project" value="UniProtKB-SubCell"/>
</dbReference>
<dbReference type="GO" id="GO:0005525">
    <property type="term" value="F:GTP binding"/>
    <property type="evidence" value="ECO:0007669"/>
    <property type="project" value="UniProtKB-UniRule"/>
</dbReference>
<dbReference type="GO" id="GO:0003924">
    <property type="term" value="F:GTPase activity"/>
    <property type="evidence" value="ECO:0007669"/>
    <property type="project" value="UniProtKB-UniRule"/>
</dbReference>
<dbReference type="GO" id="GO:0000287">
    <property type="term" value="F:magnesium ion binding"/>
    <property type="evidence" value="ECO:0007669"/>
    <property type="project" value="InterPro"/>
</dbReference>
<dbReference type="GO" id="GO:0042254">
    <property type="term" value="P:ribosome biogenesis"/>
    <property type="evidence" value="ECO:0007669"/>
    <property type="project" value="UniProtKB-UniRule"/>
</dbReference>
<dbReference type="CDD" id="cd01898">
    <property type="entry name" value="Obg"/>
    <property type="match status" value="1"/>
</dbReference>
<dbReference type="FunFam" id="2.70.210.12:FF:000001">
    <property type="entry name" value="GTPase Obg"/>
    <property type="match status" value="1"/>
</dbReference>
<dbReference type="FunFam" id="3.40.50.300:FF:000515">
    <property type="entry name" value="GTPase Obg"/>
    <property type="match status" value="1"/>
</dbReference>
<dbReference type="Gene3D" id="3.30.300.350">
    <property type="entry name" value="GTP-binding protein OBG, C-terminal domain"/>
    <property type="match status" value="1"/>
</dbReference>
<dbReference type="Gene3D" id="2.70.210.12">
    <property type="entry name" value="GTP1/OBG domain"/>
    <property type="match status" value="1"/>
</dbReference>
<dbReference type="Gene3D" id="3.40.50.300">
    <property type="entry name" value="P-loop containing nucleotide triphosphate hydrolases"/>
    <property type="match status" value="1"/>
</dbReference>
<dbReference type="HAMAP" id="MF_01454">
    <property type="entry name" value="GTPase_Obg"/>
    <property type="match status" value="1"/>
</dbReference>
<dbReference type="InterPro" id="IPR031167">
    <property type="entry name" value="G_OBG"/>
</dbReference>
<dbReference type="InterPro" id="IPR006073">
    <property type="entry name" value="GTP-bd"/>
</dbReference>
<dbReference type="InterPro" id="IPR014100">
    <property type="entry name" value="GTP-bd_Obg/CgtA"/>
</dbReference>
<dbReference type="InterPro" id="IPR036346">
    <property type="entry name" value="GTP-bd_prot_GTP1/OBG_C_sf"/>
</dbReference>
<dbReference type="InterPro" id="IPR006074">
    <property type="entry name" value="GTP1-OBG_CS"/>
</dbReference>
<dbReference type="InterPro" id="IPR006169">
    <property type="entry name" value="GTP1_OBG_dom"/>
</dbReference>
<dbReference type="InterPro" id="IPR036726">
    <property type="entry name" value="GTP1_OBG_dom_sf"/>
</dbReference>
<dbReference type="InterPro" id="IPR045086">
    <property type="entry name" value="OBG_GTPase"/>
</dbReference>
<dbReference type="InterPro" id="IPR015349">
    <property type="entry name" value="OCT_dom"/>
</dbReference>
<dbReference type="InterPro" id="IPR027417">
    <property type="entry name" value="P-loop_NTPase"/>
</dbReference>
<dbReference type="NCBIfam" id="TIGR02729">
    <property type="entry name" value="Obg_CgtA"/>
    <property type="match status" value="1"/>
</dbReference>
<dbReference type="NCBIfam" id="TIGR03595">
    <property type="entry name" value="Obg_CgtA_exten"/>
    <property type="match status" value="1"/>
</dbReference>
<dbReference type="NCBIfam" id="NF008954">
    <property type="entry name" value="PRK12296.1"/>
    <property type="match status" value="1"/>
</dbReference>
<dbReference type="NCBIfam" id="NF008955">
    <property type="entry name" value="PRK12297.1"/>
    <property type="match status" value="1"/>
</dbReference>
<dbReference type="NCBIfam" id="NF008956">
    <property type="entry name" value="PRK12299.1"/>
    <property type="match status" value="1"/>
</dbReference>
<dbReference type="PANTHER" id="PTHR11702">
    <property type="entry name" value="DEVELOPMENTALLY REGULATED GTP-BINDING PROTEIN-RELATED"/>
    <property type="match status" value="1"/>
</dbReference>
<dbReference type="PANTHER" id="PTHR11702:SF31">
    <property type="entry name" value="MITOCHONDRIAL RIBOSOME-ASSOCIATED GTPASE 2"/>
    <property type="match status" value="1"/>
</dbReference>
<dbReference type="Pfam" id="PF09269">
    <property type="entry name" value="DUF1967"/>
    <property type="match status" value="1"/>
</dbReference>
<dbReference type="Pfam" id="PF01018">
    <property type="entry name" value="GTP1_OBG"/>
    <property type="match status" value="1"/>
</dbReference>
<dbReference type="Pfam" id="PF01926">
    <property type="entry name" value="MMR_HSR1"/>
    <property type="match status" value="1"/>
</dbReference>
<dbReference type="PIRSF" id="PIRSF002401">
    <property type="entry name" value="GTP_bd_Obg/CgtA"/>
    <property type="match status" value="1"/>
</dbReference>
<dbReference type="PRINTS" id="PR00326">
    <property type="entry name" value="GTP1OBG"/>
</dbReference>
<dbReference type="SUPFAM" id="SSF102741">
    <property type="entry name" value="Obg GTP-binding protein C-terminal domain"/>
    <property type="match status" value="1"/>
</dbReference>
<dbReference type="SUPFAM" id="SSF82051">
    <property type="entry name" value="Obg GTP-binding protein N-terminal domain"/>
    <property type="match status" value="1"/>
</dbReference>
<dbReference type="SUPFAM" id="SSF52540">
    <property type="entry name" value="P-loop containing nucleoside triphosphate hydrolases"/>
    <property type="match status" value="1"/>
</dbReference>
<dbReference type="PROSITE" id="PS51710">
    <property type="entry name" value="G_OBG"/>
    <property type="match status" value="1"/>
</dbReference>
<dbReference type="PROSITE" id="PS00905">
    <property type="entry name" value="GTP1_OBG"/>
    <property type="match status" value="1"/>
</dbReference>
<dbReference type="PROSITE" id="PS51883">
    <property type="entry name" value="OBG"/>
    <property type="match status" value="1"/>
</dbReference>
<dbReference type="PROSITE" id="PS51881">
    <property type="entry name" value="OCT"/>
    <property type="match status" value="1"/>
</dbReference>
<feature type="chain" id="PRO_0000386270" description="GTPase Obg">
    <location>
        <begin position="1"/>
        <end position="430"/>
    </location>
</feature>
<feature type="domain" description="Obg" evidence="3">
    <location>
        <begin position="1"/>
        <end position="158"/>
    </location>
</feature>
<feature type="domain" description="OBG-type G" evidence="1">
    <location>
        <begin position="159"/>
        <end position="329"/>
    </location>
</feature>
<feature type="domain" description="OCT" evidence="2">
    <location>
        <begin position="352"/>
        <end position="430"/>
    </location>
</feature>
<feature type="region of interest" description="Disordered" evidence="4">
    <location>
        <begin position="118"/>
        <end position="145"/>
    </location>
</feature>
<feature type="binding site" evidence="1">
    <location>
        <begin position="165"/>
        <end position="172"/>
    </location>
    <ligand>
        <name>GTP</name>
        <dbReference type="ChEBI" id="CHEBI:37565"/>
    </ligand>
</feature>
<feature type="binding site" evidence="1">
    <location>
        <position position="172"/>
    </location>
    <ligand>
        <name>Mg(2+)</name>
        <dbReference type="ChEBI" id="CHEBI:18420"/>
    </ligand>
</feature>
<feature type="binding site" evidence="1">
    <location>
        <begin position="190"/>
        <end position="194"/>
    </location>
    <ligand>
        <name>GTP</name>
        <dbReference type="ChEBI" id="CHEBI:37565"/>
    </ligand>
</feature>
<feature type="binding site" evidence="1">
    <location>
        <position position="192"/>
    </location>
    <ligand>
        <name>Mg(2+)</name>
        <dbReference type="ChEBI" id="CHEBI:18420"/>
    </ligand>
</feature>
<feature type="binding site" evidence="1">
    <location>
        <begin position="212"/>
        <end position="215"/>
    </location>
    <ligand>
        <name>GTP</name>
        <dbReference type="ChEBI" id="CHEBI:37565"/>
    </ligand>
</feature>
<feature type="binding site" evidence="1">
    <location>
        <begin position="282"/>
        <end position="285"/>
    </location>
    <ligand>
        <name>GTP</name>
        <dbReference type="ChEBI" id="CHEBI:37565"/>
    </ligand>
</feature>
<feature type="binding site" evidence="1">
    <location>
        <begin position="310"/>
        <end position="312"/>
    </location>
    <ligand>
        <name>GTP</name>
        <dbReference type="ChEBI" id="CHEBI:37565"/>
    </ligand>
</feature>
<organism>
    <name type="scientific">Staphylococcus aureus (strain JH1)</name>
    <dbReference type="NCBI Taxonomy" id="359787"/>
    <lineage>
        <taxon>Bacteria</taxon>
        <taxon>Bacillati</taxon>
        <taxon>Bacillota</taxon>
        <taxon>Bacilli</taxon>
        <taxon>Bacillales</taxon>
        <taxon>Staphylococcaceae</taxon>
        <taxon>Staphylococcus</taxon>
    </lineage>
</organism>
<protein>
    <recommendedName>
        <fullName evidence="1">GTPase Obg</fullName>
        <ecNumber evidence="1">3.6.5.-</ecNumber>
    </recommendedName>
    <alternativeName>
        <fullName evidence="1">GTP-binding protein Obg</fullName>
    </alternativeName>
</protein>
<evidence type="ECO:0000255" key="1">
    <source>
        <dbReference type="HAMAP-Rule" id="MF_01454"/>
    </source>
</evidence>
<evidence type="ECO:0000255" key="2">
    <source>
        <dbReference type="PROSITE-ProRule" id="PRU01229"/>
    </source>
</evidence>
<evidence type="ECO:0000255" key="3">
    <source>
        <dbReference type="PROSITE-ProRule" id="PRU01231"/>
    </source>
</evidence>
<evidence type="ECO:0000256" key="4">
    <source>
        <dbReference type="SAM" id="MobiDB-lite"/>
    </source>
</evidence>
<reference key="1">
    <citation type="submission" date="2007-06" db="EMBL/GenBank/DDBJ databases">
        <title>Complete sequence of chromosome of Staphylococcus aureus subsp. aureus JH1.</title>
        <authorList>
            <consortium name="US DOE Joint Genome Institute"/>
            <person name="Copeland A."/>
            <person name="Lucas S."/>
            <person name="Lapidus A."/>
            <person name="Barry K."/>
            <person name="Detter J.C."/>
            <person name="Glavina del Rio T."/>
            <person name="Hammon N."/>
            <person name="Israni S."/>
            <person name="Dalin E."/>
            <person name="Tice H."/>
            <person name="Pitluck S."/>
            <person name="Chain P."/>
            <person name="Malfatti S."/>
            <person name="Shin M."/>
            <person name="Vergez L."/>
            <person name="Schmutz J."/>
            <person name="Larimer F."/>
            <person name="Land M."/>
            <person name="Hauser L."/>
            <person name="Kyrpides N."/>
            <person name="Ivanova N."/>
            <person name="Tomasz A."/>
            <person name="Richardson P."/>
        </authorList>
    </citation>
    <scope>NUCLEOTIDE SEQUENCE [LARGE SCALE GENOMIC DNA]</scope>
    <source>
        <strain>JH1</strain>
    </source>
</reference>
<proteinExistence type="inferred from homology"/>